<name>RS21_KLEP7</name>
<keyword id="KW-0687">Ribonucleoprotein</keyword>
<keyword id="KW-0689">Ribosomal protein</keyword>
<comment type="similarity">
    <text evidence="1">Belongs to the bacterial ribosomal protein bS21 family.</text>
</comment>
<feature type="chain" id="PRO_1000005124" description="Small ribosomal subunit protein bS21">
    <location>
        <begin position="1"/>
        <end position="71"/>
    </location>
</feature>
<feature type="region of interest" description="Disordered" evidence="2">
    <location>
        <begin position="43"/>
        <end position="71"/>
    </location>
</feature>
<feature type="compositionally biased region" description="Basic residues" evidence="2">
    <location>
        <begin position="46"/>
        <end position="59"/>
    </location>
</feature>
<feature type="compositionally biased region" description="Basic and acidic residues" evidence="2">
    <location>
        <begin position="60"/>
        <end position="71"/>
    </location>
</feature>
<evidence type="ECO:0000255" key="1">
    <source>
        <dbReference type="HAMAP-Rule" id="MF_00358"/>
    </source>
</evidence>
<evidence type="ECO:0000256" key="2">
    <source>
        <dbReference type="SAM" id="MobiDB-lite"/>
    </source>
</evidence>
<evidence type="ECO:0000305" key="3"/>
<organism>
    <name type="scientific">Klebsiella pneumoniae subsp. pneumoniae (strain ATCC 700721 / MGH 78578)</name>
    <dbReference type="NCBI Taxonomy" id="272620"/>
    <lineage>
        <taxon>Bacteria</taxon>
        <taxon>Pseudomonadati</taxon>
        <taxon>Pseudomonadota</taxon>
        <taxon>Gammaproteobacteria</taxon>
        <taxon>Enterobacterales</taxon>
        <taxon>Enterobacteriaceae</taxon>
        <taxon>Klebsiella/Raoultella group</taxon>
        <taxon>Klebsiella</taxon>
        <taxon>Klebsiella pneumoniae complex</taxon>
    </lineage>
</organism>
<accession>A6TE47</accession>
<sequence length="71" mass="8500">MPVIKVRENEPFDVALRRFKRSCEKAGVLAEVRRREFYEKPTTERKRAKASAVKRHAKKLARENARRTRLY</sequence>
<proteinExistence type="inferred from homology"/>
<protein>
    <recommendedName>
        <fullName evidence="1">Small ribosomal subunit protein bS21</fullName>
    </recommendedName>
    <alternativeName>
        <fullName evidence="3">30S ribosomal protein S21</fullName>
    </alternativeName>
</protein>
<gene>
    <name evidence="1" type="primary">rpsU</name>
    <name type="ordered locus">KPN78578_34070</name>
    <name type="ORF">KPN_03472</name>
</gene>
<reference key="1">
    <citation type="submission" date="2006-09" db="EMBL/GenBank/DDBJ databases">
        <authorList>
            <consortium name="The Klebsiella pneumonia Genome Sequencing Project"/>
            <person name="McClelland M."/>
            <person name="Sanderson E.K."/>
            <person name="Spieth J."/>
            <person name="Clifton W.S."/>
            <person name="Latreille P."/>
            <person name="Sabo A."/>
            <person name="Pepin K."/>
            <person name="Bhonagiri V."/>
            <person name="Porwollik S."/>
            <person name="Ali J."/>
            <person name="Wilson R.K."/>
        </authorList>
    </citation>
    <scope>NUCLEOTIDE SEQUENCE [LARGE SCALE GENOMIC DNA]</scope>
    <source>
        <strain>ATCC 700721 / MGH 78578</strain>
    </source>
</reference>
<dbReference type="EMBL" id="CP000647">
    <property type="protein sequence ID" value="ABR78868.1"/>
    <property type="molecule type" value="Genomic_DNA"/>
</dbReference>
<dbReference type="RefSeq" id="WP_001144069.1">
    <property type="nucleotide sequence ID" value="NC_009648.1"/>
</dbReference>
<dbReference type="SMR" id="A6TE47"/>
<dbReference type="STRING" id="272620.KPN_03472"/>
<dbReference type="jPOST" id="A6TE47"/>
<dbReference type="PaxDb" id="272620-KPN_03472"/>
<dbReference type="EnsemblBacteria" id="ABR78868">
    <property type="protein sequence ID" value="ABR78868"/>
    <property type="gene ID" value="KPN_03472"/>
</dbReference>
<dbReference type="GeneID" id="98390195"/>
<dbReference type="KEGG" id="kpn:KPN_03472"/>
<dbReference type="HOGENOM" id="CLU_159258_1_0_6"/>
<dbReference type="Proteomes" id="UP000000265">
    <property type="component" value="Chromosome"/>
</dbReference>
<dbReference type="GO" id="GO:1990904">
    <property type="term" value="C:ribonucleoprotein complex"/>
    <property type="evidence" value="ECO:0007669"/>
    <property type="project" value="UniProtKB-KW"/>
</dbReference>
<dbReference type="GO" id="GO:0005840">
    <property type="term" value="C:ribosome"/>
    <property type="evidence" value="ECO:0007669"/>
    <property type="project" value="UniProtKB-KW"/>
</dbReference>
<dbReference type="GO" id="GO:0003735">
    <property type="term" value="F:structural constituent of ribosome"/>
    <property type="evidence" value="ECO:0007669"/>
    <property type="project" value="InterPro"/>
</dbReference>
<dbReference type="GO" id="GO:0006412">
    <property type="term" value="P:translation"/>
    <property type="evidence" value="ECO:0007669"/>
    <property type="project" value="UniProtKB-UniRule"/>
</dbReference>
<dbReference type="FunFam" id="1.20.5.1150:FF:000001">
    <property type="entry name" value="30S ribosomal protein S21"/>
    <property type="match status" value="1"/>
</dbReference>
<dbReference type="Gene3D" id="1.20.5.1150">
    <property type="entry name" value="Ribosomal protein S8"/>
    <property type="match status" value="1"/>
</dbReference>
<dbReference type="HAMAP" id="MF_00358">
    <property type="entry name" value="Ribosomal_bS21"/>
    <property type="match status" value="1"/>
</dbReference>
<dbReference type="InterPro" id="IPR001911">
    <property type="entry name" value="Ribosomal_bS21"/>
</dbReference>
<dbReference type="InterPro" id="IPR018278">
    <property type="entry name" value="Ribosomal_bS21_CS"/>
</dbReference>
<dbReference type="InterPro" id="IPR038380">
    <property type="entry name" value="Ribosomal_bS21_sf"/>
</dbReference>
<dbReference type="NCBIfam" id="TIGR00030">
    <property type="entry name" value="S21p"/>
    <property type="match status" value="1"/>
</dbReference>
<dbReference type="PANTHER" id="PTHR21109">
    <property type="entry name" value="MITOCHONDRIAL 28S RIBOSOMAL PROTEIN S21"/>
    <property type="match status" value="1"/>
</dbReference>
<dbReference type="PANTHER" id="PTHR21109:SF22">
    <property type="entry name" value="SMALL RIBOSOMAL SUBUNIT PROTEIN BS21"/>
    <property type="match status" value="1"/>
</dbReference>
<dbReference type="Pfam" id="PF01165">
    <property type="entry name" value="Ribosomal_S21"/>
    <property type="match status" value="1"/>
</dbReference>
<dbReference type="PRINTS" id="PR00976">
    <property type="entry name" value="RIBOSOMALS21"/>
</dbReference>
<dbReference type="PROSITE" id="PS01181">
    <property type="entry name" value="RIBOSOMAL_S21"/>
    <property type="match status" value="1"/>
</dbReference>